<feature type="chain" id="PRO_1000045766" description="Adenosylcobinamide-GDP ribazoletransferase">
    <location>
        <begin position="1"/>
        <end position="248"/>
    </location>
</feature>
<feature type="transmembrane region" description="Helical" evidence="1">
    <location>
        <begin position="34"/>
        <end position="54"/>
    </location>
</feature>
<feature type="transmembrane region" description="Helical" evidence="1">
    <location>
        <begin position="58"/>
        <end position="78"/>
    </location>
</feature>
<feature type="transmembrane region" description="Helical" evidence="1">
    <location>
        <begin position="113"/>
        <end position="133"/>
    </location>
</feature>
<feature type="transmembrane region" description="Helical" evidence="1">
    <location>
        <begin position="139"/>
        <end position="159"/>
    </location>
</feature>
<feature type="transmembrane region" description="Helical" evidence="1">
    <location>
        <begin position="185"/>
        <end position="205"/>
    </location>
</feature>
<feature type="transmembrane region" description="Helical" evidence="1">
    <location>
        <begin position="227"/>
        <end position="247"/>
    </location>
</feature>
<evidence type="ECO:0000255" key="1">
    <source>
        <dbReference type="HAMAP-Rule" id="MF_00719"/>
    </source>
</evidence>
<comment type="function">
    <text evidence="1">Joins adenosylcobinamide-GDP and alpha-ribazole to generate adenosylcobalamin (Ado-cobalamin). Also synthesizes adenosylcobalamin 5'-phosphate from adenosylcobinamide-GDP and alpha-ribazole 5'-phosphate.</text>
</comment>
<comment type="catalytic activity">
    <reaction evidence="1">
        <text>alpha-ribazole + adenosylcob(III)inamide-GDP = adenosylcob(III)alamin + GMP + H(+)</text>
        <dbReference type="Rhea" id="RHEA:16049"/>
        <dbReference type="ChEBI" id="CHEBI:10329"/>
        <dbReference type="ChEBI" id="CHEBI:15378"/>
        <dbReference type="ChEBI" id="CHEBI:18408"/>
        <dbReference type="ChEBI" id="CHEBI:58115"/>
        <dbReference type="ChEBI" id="CHEBI:60487"/>
        <dbReference type="EC" id="2.7.8.26"/>
    </reaction>
</comment>
<comment type="catalytic activity">
    <reaction evidence="1">
        <text>alpha-ribazole 5'-phosphate + adenosylcob(III)inamide-GDP = adenosylcob(III)alamin 5'-phosphate + GMP + H(+)</text>
        <dbReference type="Rhea" id="RHEA:23560"/>
        <dbReference type="ChEBI" id="CHEBI:15378"/>
        <dbReference type="ChEBI" id="CHEBI:57918"/>
        <dbReference type="ChEBI" id="CHEBI:58115"/>
        <dbReference type="ChEBI" id="CHEBI:60487"/>
        <dbReference type="ChEBI" id="CHEBI:60493"/>
        <dbReference type="EC" id="2.7.8.26"/>
    </reaction>
</comment>
<comment type="cofactor">
    <cofactor evidence="1">
        <name>Mg(2+)</name>
        <dbReference type="ChEBI" id="CHEBI:18420"/>
    </cofactor>
</comment>
<comment type="pathway">
    <text evidence="1">Cofactor biosynthesis; adenosylcobalamin biosynthesis; adenosylcobalamin from cob(II)yrinate a,c-diamide: step 7/7.</text>
</comment>
<comment type="subcellular location">
    <subcellularLocation>
        <location evidence="1">Cell membrane</location>
        <topology evidence="1">Multi-pass membrane protein</topology>
    </subcellularLocation>
</comment>
<comment type="similarity">
    <text evidence="1">Belongs to the CobS family.</text>
</comment>
<organism>
    <name type="scientific">Acetivibrio thermocellus (strain ATCC 27405 / DSM 1237 / JCM 9322 / NBRC 103400 / NCIMB 10682 / NRRL B-4536 / VPI 7372)</name>
    <name type="common">Clostridium thermocellum</name>
    <dbReference type="NCBI Taxonomy" id="203119"/>
    <lineage>
        <taxon>Bacteria</taxon>
        <taxon>Bacillati</taxon>
        <taxon>Bacillota</taxon>
        <taxon>Clostridia</taxon>
        <taxon>Eubacteriales</taxon>
        <taxon>Oscillospiraceae</taxon>
        <taxon>Acetivibrio</taxon>
    </lineage>
</organism>
<proteinExistence type="inferred from homology"/>
<keyword id="KW-1003">Cell membrane</keyword>
<keyword id="KW-0169">Cobalamin biosynthesis</keyword>
<keyword id="KW-0460">Magnesium</keyword>
<keyword id="KW-0472">Membrane</keyword>
<keyword id="KW-1185">Reference proteome</keyword>
<keyword id="KW-0808">Transferase</keyword>
<keyword id="KW-0812">Transmembrane</keyword>
<keyword id="KW-1133">Transmembrane helix</keyword>
<name>COBS_ACET2</name>
<gene>
    <name evidence="1" type="primary">cobS</name>
    <name type="ordered locus">Cthe_3152</name>
</gene>
<dbReference type="EC" id="2.7.8.26" evidence="1"/>
<dbReference type="EMBL" id="CP000568">
    <property type="protein sequence ID" value="ABN54347.1"/>
    <property type="molecule type" value="Genomic_DNA"/>
</dbReference>
<dbReference type="RefSeq" id="WP_003511682.1">
    <property type="nucleotide sequence ID" value="NC_009012.1"/>
</dbReference>
<dbReference type="STRING" id="203119.Cthe_3152"/>
<dbReference type="GeneID" id="35805031"/>
<dbReference type="KEGG" id="cth:Cthe_3152"/>
<dbReference type="eggNOG" id="COG0368">
    <property type="taxonomic scope" value="Bacteria"/>
</dbReference>
<dbReference type="HOGENOM" id="CLU_057426_1_2_9"/>
<dbReference type="OrthoDB" id="9794626at2"/>
<dbReference type="UniPathway" id="UPA00148">
    <property type="reaction ID" value="UER00238"/>
</dbReference>
<dbReference type="Proteomes" id="UP000002145">
    <property type="component" value="Chromosome"/>
</dbReference>
<dbReference type="GO" id="GO:0005886">
    <property type="term" value="C:plasma membrane"/>
    <property type="evidence" value="ECO:0007669"/>
    <property type="project" value="UniProtKB-SubCell"/>
</dbReference>
<dbReference type="GO" id="GO:0051073">
    <property type="term" value="F:adenosylcobinamide-GDP ribazoletransferase activity"/>
    <property type="evidence" value="ECO:0007669"/>
    <property type="project" value="UniProtKB-UniRule"/>
</dbReference>
<dbReference type="GO" id="GO:0008818">
    <property type="term" value="F:cobalamin 5'-phosphate synthase activity"/>
    <property type="evidence" value="ECO:0007669"/>
    <property type="project" value="UniProtKB-UniRule"/>
</dbReference>
<dbReference type="GO" id="GO:0009236">
    <property type="term" value="P:cobalamin biosynthetic process"/>
    <property type="evidence" value="ECO:0007669"/>
    <property type="project" value="UniProtKB-UniRule"/>
</dbReference>
<dbReference type="HAMAP" id="MF_00719">
    <property type="entry name" value="CobS"/>
    <property type="match status" value="1"/>
</dbReference>
<dbReference type="InterPro" id="IPR003805">
    <property type="entry name" value="CobS"/>
</dbReference>
<dbReference type="NCBIfam" id="TIGR00317">
    <property type="entry name" value="cobS"/>
    <property type="match status" value="1"/>
</dbReference>
<dbReference type="PANTHER" id="PTHR34148">
    <property type="entry name" value="ADENOSYLCOBINAMIDE-GDP RIBAZOLETRANSFERASE"/>
    <property type="match status" value="1"/>
</dbReference>
<dbReference type="PANTHER" id="PTHR34148:SF1">
    <property type="entry name" value="ADENOSYLCOBINAMIDE-GDP RIBAZOLETRANSFERASE"/>
    <property type="match status" value="1"/>
</dbReference>
<dbReference type="Pfam" id="PF02654">
    <property type="entry name" value="CobS"/>
    <property type="match status" value="1"/>
</dbReference>
<reference key="1">
    <citation type="submission" date="2007-02" db="EMBL/GenBank/DDBJ databases">
        <title>Complete sequence of Clostridium thermocellum ATCC 27405.</title>
        <authorList>
            <consortium name="US DOE Joint Genome Institute"/>
            <person name="Copeland A."/>
            <person name="Lucas S."/>
            <person name="Lapidus A."/>
            <person name="Barry K."/>
            <person name="Detter J.C."/>
            <person name="Glavina del Rio T."/>
            <person name="Hammon N."/>
            <person name="Israni S."/>
            <person name="Dalin E."/>
            <person name="Tice H."/>
            <person name="Pitluck S."/>
            <person name="Chertkov O."/>
            <person name="Brettin T."/>
            <person name="Bruce D."/>
            <person name="Han C."/>
            <person name="Tapia R."/>
            <person name="Gilna P."/>
            <person name="Schmutz J."/>
            <person name="Larimer F."/>
            <person name="Land M."/>
            <person name="Hauser L."/>
            <person name="Kyrpides N."/>
            <person name="Mikhailova N."/>
            <person name="Wu J.H.D."/>
            <person name="Newcomb M."/>
            <person name="Richardson P."/>
        </authorList>
    </citation>
    <scope>NUCLEOTIDE SEQUENCE [LARGE SCALE GENOMIC DNA]</scope>
    <source>
        <strain>ATCC 27405 / DSM 1237 / JCM 9322 / NBRC 103400 / NCIMB 10682 / NRRL B-4536 / VPI 7372</strain>
    </source>
</reference>
<protein>
    <recommendedName>
        <fullName evidence="1">Adenosylcobinamide-GDP ribazoletransferase</fullName>
        <ecNumber evidence="1">2.7.8.26</ecNumber>
    </recommendedName>
    <alternativeName>
        <fullName evidence="1">Cobalamin synthase</fullName>
    </alternativeName>
    <alternativeName>
        <fullName evidence="1">Cobalamin-5'-phosphate synthase</fullName>
    </alternativeName>
</protein>
<accession>A3DK68</accession>
<sequence>MKYLKRILLMVGFLTRIPVPFKIDGTEEDYGKGLVFAPVVGLLIGGILTILFYILKRFFPPGVTGILLIAAYIMLTGGLHLDGLGDTFDGIFSNRSREKMLEIMRDSRIGTNAVLAVICVVILNYALLSSIPLSGLPKALLLFPVAGRIGSLVGAGSTVYAREGEGLGKSFINCCGIKEILQGGIIYFIVSLLVLNIKGLLLAAATMITSFATVKFFAGKVGGATGDILGAVCELNQTFFLILFYLFK</sequence>